<organism evidence="18">
    <name type="scientific">Mus musculus</name>
    <name type="common">Mouse</name>
    <dbReference type="NCBI Taxonomy" id="10090"/>
    <lineage>
        <taxon>Eukaryota</taxon>
        <taxon>Metazoa</taxon>
        <taxon>Chordata</taxon>
        <taxon>Craniata</taxon>
        <taxon>Vertebrata</taxon>
        <taxon>Euteleostomi</taxon>
        <taxon>Mammalia</taxon>
        <taxon>Eutheria</taxon>
        <taxon>Euarchontoglires</taxon>
        <taxon>Glires</taxon>
        <taxon>Rodentia</taxon>
        <taxon>Myomorpha</taxon>
        <taxon>Muroidea</taxon>
        <taxon>Muridae</taxon>
        <taxon>Murinae</taxon>
        <taxon>Mus</taxon>
        <taxon>Mus</taxon>
    </lineage>
</organism>
<reference evidence="18" key="1">
    <citation type="journal article" date="2009" name="PLoS Biol.">
        <title>Lineage-specific biology revealed by a finished genome assembly of the mouse.</title>
        <authorList>
            <person name="Church D.M."/>
            <person name="Goodstadt L."/>
            <person name="Hillier L.W."/>
            <person name="Zody M.C."/>
            <person name="Goldstein S."/>
            <person name="She X."/>
            <person name="Bult C.J."/>
            <person name="Agarwala R."/>
            <person name="Cherry J.L."/>
            <person name="DiCuccio M."/>
            <person name="Hlavina W."/>
            <person name="Kapustin Y."/>
            <person name="Meric P."/>
            <person name="Maglott D."/>
            <person name="Birtle Z."/>
            <person name="Marques A.C."/>
            <person name="Graves T."/>
            <person name="Zhou S."/>
            <person name="Teague B."/>
            <person name="Potamousis K."/>
            <person name="Churas C."/>
            <person name="Place M."/>
            <person name="Herschleb J."/>
            <person name="Runnheim R."/>
            <person name="Forrest D."/>
            <person name="Amos-Landgraf J."/>
            <person name="Schwartz D.C."/>
            <person name="Cheng Z."/>
            <person name="Lindblad-Toh K."/>
            <person name="Eichler E.E."/>
            <person name="Ponting C.P."/>
        </authorList>
    </citation>
    <scope>NUCLEOTIDE SEQUENCE [LARGE SCALE GENOMIC DNA]</scope>
    <source>
        <strain evidence="18">C57BL/6J</strain>
    </source>
</reference>
<reference evidence="16" key="2">
    <citation type="journal article" date="2005" name="Science">
        <title>The transcriptional landscape of the mammalian genome.</title>
        <authorList>
            <person name="Carninci P."/>
            <person name="Kasukawa T."/>
            <person name="Katayama S."/>
            <person name="Gough J."/>
            <person name="Frith M.C."/>
            <person name="Maeda N."/>
            <person name="Oyama R."/>
            <person name="Ravasi T."/>
            <person name="Lenhard B."/>
            <person name="Wells C."/>
            <person name="Kodzius R."/>
            <person name="Shimokawa K."/>
            <person name="Bajic V.B."/>
            <person name="Brenner S.E."/>
            <person name="Batalov S."/>
            <person name="Forrest A.R."/>
            <person name="Zavolan M."/>
            <person name="Davis M.J."/>
            <person name="Wilming L.G."/>
            <person name="Aidinis V."/>
            <person name="Allen J.E."/>
            <person name="Ambesi-Impiombato A."/>
            <person name="Apweiler R."/>
            <person name="Aturaliya R.N."/>
            <person name="Bailey T.L."/>
            <person name="Bansal M."/>
            <person name="Baxter L."/>
            <person name="Beisel K.W."/>
            <person name="Bersano T."/>
            <person name="Bono H."/>
            <person name="Chalk A.M."/>
            <person name="Chiu K.P."/>
            <person name="Choudhary V."/>
            <person name="Christoffels A."/>
            <person name="Clutterbuck D.R."/>
            <person name="Crowe M.L."/>
            <person name="Dalla E."/>
            <person name="Dalrymple B.P."/>
            <person name="de Bono B."/>
            <person name="Della Gatta G."/>
            <person name="di Bernardo D."/>
            <person name="Down T."/>
            <person name="Engstrom P."/>
            <person name="Fagiolini M."/>
            <person name="Faulkner G."/>
            <person name="Fletcher C.F."/>
            <person name="Fukushima T."/>
            <person name="Furuno M."/>
            <person name="Futaki S."/>
            <person name="Gariboldi M."/>
            <person name="Georgii-Hemming P."/>
            <person name="Gingeras T.R."/>
            <person name="Gojobori T."/>
            <person name="Green R.E."/>
            <person name="Gustincich S."/>
            <person name="Harbers M."/>
            <person name="Hayashi Y."/>
            <person name="Hensch T.K."/>
            <person name="Hirokawa N."/>
            <person name="Hill D."/>
            <person name="Huminiecki L."/>
            <person name="Iacono M."/>
            <person name="Ikeo K."/>
            <person name="Iwama A."/>
            <person name="Ishikawa T."/>
            <person name="Jakt M."/>
            <person name="Kanapin A."/>
            <person name="Katoh M."/>
            <person name="Kawasawa Y."/>
            <person name="Kelso J."/>
            <person name="Kitamura H."/>
            <person name="Kitano H."/>
            <person name="Kollias G."/>
            <person name="Krishnan S.P."/>
            <person name="Kruger A."/>
            <person name="Kummerfeld S.K."/>
            <person name="Kurochkin I.V."/>
            <person name="Lareau L.F."/>
            <person name="Lazarevic D."/>
            <person name="Lipovich L."/>
            <person name="Liu J."/>
            <person name="Liuni S."/>
            <person name="McWilliam S."/>
            <person name="Madan Babu M."/>
            <person name="Madera M."/>
            <person name="Marchionni L."/>
            <person name="Matsuda H."/>
            <person name="Matsuzawa S."/>
            <person name="Miki H."/>
            <person name="Mignone F."/>
            <person name="Miyake S."/>
            <person name="Morris K."/>
            <person name="Mottagui-Tabar S."/>
            <person name="Mulder N."/>
            <person name="Nakano N."/>
            <person name="Nakauchi H."/>
            <person name="Ng P."/>
            <person name="Nilsson R."/>
            <person name="Nishiguchi S."/>
            <person name="Nishikawa S."/>
            <person name="Nori F."/>
            <person name="Ohara O."/>
            <person name="Okazaki Y."/>
            <person name="Orlando V."/>
            <person name="Pang K.C."/>
            <person name="Pavan W.J."/>
            <person name="Pavesi G."/>
            <person name="Pesole G."/>
            <person name="Petrovsky N."/>
            <person name="Piazza S."/>
            <person name="Reed J."/>
            <person name="Reid J.F."/>
            <person name="Ring B.Z."/>
            <person name="Ringwald M."/>
            <person name="Rost B."/>
            <person name="Ruan Y."/>
            <person name="Salzberg S.L."/>
            <person name="Sandelin A."/>
            <person name="Schneider C."/>
            <person name="Schoenbach C."/>
            <person name="Sekiguchi K."/>
            <person name="Semple C.A."/>
            <person name="Seno S."/>
            <person name="Sessa L."/>
            <person name="Sheng Y."/>
            <person name="Shibata Y."/>
            <person name="Shimada H."/>
            <person name="Shimada K."/>
            <person name="Silva D."/>
            <person name="Sinclair B."/>
            <person name="Sperling S."/>
            <person name="Stupka E."/>
            <person name="Sugiura K."/>
            <person name="Sultana R."/>
            <person name="Takenaka Y."/>
            <person name="Taki K."/>
            <person name="Tammoja K."/>
            <person name="Tan S.L."/>
            <person name="Tang S."/>
            <person name="Taylor M.S."/>
            <person name="Tegner J."/>
            <person name="Teichmann S.A."/>
            <person name="Ueda H.R."/>
            <person name="van Nimwegen E."/>
            <person name="Verardo R."/>
            <person name="Wei C.L."/>
            <person name="Yagi K."/>
            <person name="Yamanishi H."/>
            <person name="Zabarovsky E."/>
            <person name="Zhu S."/>
            <person name="Zimmer A."/>
            <person name="Hide W."/>
            <person name="Bult C."/>
            <person name="Grimmond S.M."/>
            <person name="Teasdale R.D."/>
            <person name="Liu E.T."/>
            <person name="Brusic V."/>
            <person name="Quackenbush J."/>
            <person name="Wahlestedt C."/>
            <person name="Mattick J.S."/>
            <person name="Hume D.A."/>
            <person name="Kai C."/>
            <person name="Sasaki D."/>
            <person name="Tomaru Y."/>
            <person name="Fukuda S."/>
            <person name="Kanamori-Katayama M."/>
            <person name="Suzuki M."/>
            <person name="Aoki J."/>
            <person name="Arakawa T."/>
            <person name="Iida J."/>
            <person name="Imamura K."/>
            <person name="Itoh M."/>
            <person name="Kato T."/>
            <person name="Kawaji H."/>
            <person name="Kawagashira N."/>
            <person name="Kawashima T."/>
            <person name="Kojima M."/>
            <person name="Kondo S."/>
            <person name="Konno H."/>
            <person name="Nakano K."/>
            <person name="Ninomiya N."/>
            <person name="Nishio T."/>
            <person name="Okada M."/>
            <person name="Plessy C."/>
            <person name="Shibata K."/>
            <person name="Shiraki T."/>
            <person name="Suzuki S."/>
            <person name="Tagami M."/>
            <person name="Waki K."/>
            <person name="Watahiki A."/>
            <person name="Okamura-Oho Y."/>
            <person name="Suzuki H."/>
            <person name="Kawai J."/>
            <person name="Hayashizaki Y."/>
        </authorList>
    </citation>
    <scope>NUCLEOTIDE SEQUENCE [LARGE SCALE MRNA] OF 1-700 (ISOFORMS 1/2)</scope>
    <scope>NUCLEOTIDE SEQUENCE [LARGE SCALE MRNA] OF 1288-1872 (ISOFORM 1)</scope>
    <source>
        <strain evidence="16">C57BL/6J</strain>
        <tissue evidence="16">Eye</tissue>
    </source>
</reference>
<reference evidence="15" key="3">
    <citation type="journal article" date="2004" name="Genome Res.">
        <title>The status, quality, and expansion of the NIH full-length cDNA project: the Mammalian Gene Collection (MGC).</title>
        <authorList>
            <consortium name="The MGC Project Team"/>
        </authorList>
    </citation>
    <scope>NUCLEOTIDE SEQUENCE [LARGE SCALE MRNA] OF 1022-1872 (ISOFORM 2)</scope>
    <source>
        <strain evidence="15">FVB/N</strain>
        <tissue evidence="15">Mammary tumor</tissue>
    </source>
</reference>
<reference evidence="14" key="4">
    <citation type="journal article" date="2006" name="Gene Expr. Patterns">
        <title>Cloning, expression and characterization of the murine orthologue of SBF2, the gene mutated in Charcot-Marie-Tooth disease type 4B2.</title>
        <authorList>
            <person name="Kirfel J."/>
            <person name="Senderek J."/>
            <person name="Moser M."/>
            <person name="Roeper A."/>
            <person name="Stendel C."/>
            <person name="Bergmann C."/>
            <person name="Zerres K."/>
            <person name="Buettner R."/>
        </authorList>
    </citation>
    <scope>SUBCELLULAR LOCATION</scope>
    <scope>TISSUE SPECIFICITY</scope>
    <scope>DEVELOPMENTAL STAGE</scope>
</reference>
<reference evidence="14" key="5">
    <citation type="journal article" date="2006" name="Hum. Mol. Genet.">
        <title>Multi-level regulation of myotubularin-related protein-2 phosphatase activity by myotubularin-related protein-13/set-binding factor-2.</title>
        <authorList>
            <person name="Berger P."/>
            <person name="Berger I."/>
            <person name="Schaffitzel C."/>
            <person name="Tersar K."/>
            <person name="Volkmer B."/>
            <person name="Suter U."/>
        </authorList>
    </citation>
    <scope>FUNCTION</scope>
    <scope>INTERACTION WITH MTMR2</scope>
    <scope>SUBUNIT</scope>
    <scope>SUBCELLULAR LOCATION</scope>
    <scope>TISSUE SPECIFICITY</scope>
    <scope>DOMAIN</scope>
</reference>
<reference evidence="14" key="6">
    <citation type="journal article" date="2007" name="Hum. Mol. Genet.">
        <title>Mtmr13/Sbf2-deficient mice: an animal model for CMT4B2.</title>
        <authorList>
            <person name="Tersar K."/>
            <person name="Boentert M."/>
            <person name="Berger P."/>
            <person name="Bonneick S."/>
            <person name="Wessig C."/>
            <person name="Toyka K.V."/>
            <person name="Young P."/>
            <person name="Suter U."/>
        </authorList>
    </citation>
    <scope>TISSUE SPECIFICITY</scope>
    <scope>DISRUPTION PHENOTYPE</scope>
</reference>
<reference evidence="14" key="7">
    <citation type="journal article" date="2008" name="Proc. Natl. Acad. Sci. U.S.A.">
        <title>Loss of the inactive myotubularin-related phosphatase Mtmr13 leads to a Charcot-Marie-Tooth 4B2-like peripheral neuropathy in mice.</title>
        <authorList>
            <person name="Robinson F.L."/>
            <person name="Niesman I.R."/>
            <person name="Beiswenger K.K."/>
            <person name="Dixon J.E."/>
        </authorList>
    </citation>
    <scope>TISSUE SPECIFICITY</scope>
    <scope>DISRUPTION PHENOTYPE</scope>
</reference>
<reference evidence="19" key="8">
    <citation type="journal article" date="2010" name="Cell">
        <title>A tissue-specific atlas of mouse protein phosphorylation and expression.</title>
        <authorList>
            <person name="Huttlin E.L."/>
            <person name="Jedrychowski M.P."/>
            <person name="Elias J.E."/>
            <person name="Goswami T."/>
            <person name="Rad R."/>
            <person name="Beausoleil S.A."/>
            <person name="Villen J."/>
            <person name="Haas W."/>
            <person name="Sowa M.E."/>
            <person name="Gygi S.P."/>
        </authorList>
    </citation>
    <scope>IDENTIFICATION BY MASS SPECTROMETRY [LARGE SCALE ANALYSIS]</scope>
</reference>
<reference evidence="14" key="9">
    <citation type="journal article" date="2012" name="Mol. Biol. Cell">
        <title>Sbf/MTMR13 coordinates PI(3)P and Rab21 regulation in endocytic control of cellular remodeling.</title>
        <authorList>
            <person name="Jean S."/>
            <person name="Cox S."/>
            <person name="Schmidt E.J."/>
            <person name="Robinson F.L."/>
            <person name="Kiger A."/>
        </authorList>
    </citation>
    <scope>INTERACTION WITH PIK3C2A</scope>
    <scope>TISSUE SPECIFICITY</scope>
</reference>
<reference evidence="14" key="10">
    <citation type="journal article" date="2013" name="Hum. Mol. Genet.">
        <title>The CMT4B disease-causing phosphatases Mtmr2 and Mtmr13 localize to the Schwann cell cytoplasm and endomembrane compartments, where they depend upon each other to achieve wild-type levels of protein expression.</title>
        <authorList>
            <person name="Ng A.A."/>
            <person name="Logan A.M."/>
            <person name="Schmidt E.J."/>
            <person name="Robinson F.L."/>
        </authorList>
    </citation>
    <scope>SUBCELLULAR LOCATION</scope>
    <scope>TISSUE SPECIFICITY</scope>
    <scope>DISRUPTION PHENOTYPE</scope>
</reference>
<reference key="11">
    <citation type="journal article" date="2022" name="Hum. Mol. Genet.">
        <title>Distinct roles for the Charcot-Marie-Tooth disease-causing endosomal regulators Mtmr5 and Mtmr13 in axon radial sorting and Schwann cell myelination.</title>
        <authorList>
            <person name="Mammel A.E."/>
            <person name="Delgado K.C."/>
            <person name="Chin A.L."/>
            <person name="Condon A.F."/>
            <person name="Hill J.Q."/>
            <person name="Aicher S.A."/>
            <person name="Wang Y."/>
            <person name="Fedorov L.M."/>
            <person name="Robinson F.L."/>
        </authorList>
    </citation>
    <scope>TISSUE SPECIFICITY</scope>
    <scope>DEVELOPMENTAL STAGE</scope>
    <scope>DISRUPTION PHENOTYPE</scope>
</reference>
<gene>
    <name evidence="17" type="primary">Sbf2</name>
</gene>
<protein>
    <recommendedName>
        <fullName evidence="14">Myotubularin-related protein 13</fullName>
    </recommendedName>
    <alternativeName>
        <fullName evidence="14">Inactive phosphatidylinositol 3-phosphatase 13</fullName>
    </alternativeName>
    <alternativeName>
        <fullName evidence="17">SET-binding factor 2</fullName>
    </alternativeName>
</protein>
<dbReference type="EMBL" id="AC122921">
    <property type="status" value="NOT_ANNOTATED_CDS"/>
    <property type="molecule type" value="Genomic_DNA"/>
</dbReference>
<dbReference type="EMBL" id="AC124472">
    <property type="status" value="NOT_ANNOTATED_CDS"/>
    <property type="molecule type" value="Genomic_DNA"/>
</dbReference>
<dbReference type="EMBL" id="AC154911">
    <property type="status" value="NOT_ANNOTATED_CDS"/>
    <property type="molecule type" value="Genomic_DNA"/>
</dbReference>
<dbReference type="EMBL" id="AK029568">
    <property type="protein sequence ID" value="BAC26517.1"/>
    <property type="molecule type" value="mRNA"/>
</dbReference>
<dbReference type="EMBL" id="AK080952">
    <property type="protein sequence ID" value="BAC38090.1"/>
    <property type="molecule type" value="mRNA"/>
</dbReference>
<dbReference type="EMBL" id="AK087396">
    <property type="protein sequence ID" value="BAC39860.1"/>
    <property type="molecule type" value="mRNA"/>
</dbReference>
<dbReference type="EMBL" id="BC015069">
    <property type="protein sequence ID" value="AAH15069.1"/>
    <property type="molecule type" value="mRNA"/>
</dbReference>
<dbReference type="CCDS" id="CCDS52361.1">
    <molecule id="E9PXF8-1"/>
</dbReference>
<dbReference type="RefSeq" id="NP_001391316.1">
    <molecule id="E9PXF8-2"/>
    <property type="nucleotide sequence ID" value="NM_001404387.1"/>
</dbReference>
<dbReference type="RefSeq" id="NP_796298.2">
    <molecule id="E9PXF8-1"/>
    <property type="nucleotide sequence ID" value="NM_177324.2"/>
</dbReference>
<dbReference type="RefSeq" id="XP_006507989.1">
    <property type="nucleotide sequence ID" value="XM_006507926.1"/>
</dbReference>
<dbReference type="SMR" id="E9PXF8"/>
<dbReference type="FunCoup" id="E9PXF8">
    <property type="interactions" value="4339"/>
</dbReference>
<dbReference type="IntAct" id="E9PXF8">
    <property type="interactions" value="1"/>
</dbReference>
<dbReference type="STRING" id="10090.ENSMUSP00000033058"/>
<dbReference type="GlyGen" id="E9PXF8">
    <property type="glycosylation" value="2 sites, 1 N-linked glycan (1 site)"/>
</dbReference>
<dbReference type="iPTMnet" id="E9PXF8"/>
<dbReference type="PhosphoSitePlus" id="E9PXF8"/>
<dbReference type="SwissPalm" id="E9PXF8"/>
<dbReference type="jPOST" id="E9PXF8"/>
<dbReference type="PaxDb" id="10090-ENSMUSP00000033058"/>
<dbReference type="PeptideAtlas" id="E9PXF8"/>
<dbReference type="ProteomicsDB" id="346740"/>
<dbReference type="ProteomicsDB" id="347539">
    <molecule id="E9PXF8-1"/>
</dbReference>
<dbReference type="Pumba" id="E9PXF8"/>
<dbReference type="Antibodypedia" id="24321">
    <property type="antibodies" value="34 antibodies from 10 providers"/>
</dbReference>
<dbReference type="DNASU" id="319934"/>
<dbReference type="Ensembl" id="ENSMUST00000033058.14">
    <molecule id="E9PXF8-1"/>
    <property type="protein sequence ID" value="ENSMUSP00000033058.8"/>
    <property type="gene ID" value="ENSMUSG00000038371.16"/>
</dbReference>
<dbReference type="Ensembl" id="ENSMUST00000164759.8">
    <molecule id="E9PXF8-2"/>
    <property type="protein sequence ID" value="ENSMUSP00000132072.2"/>
    <property type="gene ID" value="ENSMUSG00000038371.16"/>
</dbReference>
<dbReference type="GeneID" id="319934"/>
<dbReference type="KEGG" id="mmu:319934"/>
<dbReference type="UCSC" id="uc009jfe.2">
    <molecule id="E9PXF8-1"/>
    <property type="organism name" value="mouse"/>
</dbReference>
<dbReference type="AGR" id="MGI:1921831"/>
<dbReference type="CTD" id="81846"/>
<dbReference type="MGI" id="MGI:1921831">
    <property type="gene designation" value="Sbf2"/>
</dbReference>
<dbReference type="VEuPathDB" id="HostDB:ENSMUSG00000038371"/>
<dbReference type="eggNOG" id="KOG1090">
    <property type="taxonomic scope" value="Eukaryota"/>
</dbReference>
<dbReference type="eggNOG" id="KOG4471">
    <property type="taxonomic scope" value="Eukaryota"/>
</dbReference>
<dbReference type="GeneTree" id="ENSGT00940000155385"/>
<dbReference type="HOGENOM" id="CLU_002298_1_1_1"/>
<dbReference type="InParanoid" id="E9PXF8"/>
<dbReference type="OMA" id="WFPQLHK"/>
<dbReference type="OrthoDB" id="74314at2759"/>
<dbReference type="PhylomeDB" id="E9PXF8"/>
<dbReference type="TreeFam" id="TF318583"/>
<dbReference type="Reactome" id="R-MMU-8876198">
    <property type="pathway name" value="RAB GEFs exchange GTP for GDP on RABs"/>
</dbReference>
<dbReference type="BioGRID-ORCS" id="319934">
    <property type="hits" value="0 hits in 63 CRISPR screens"/>
</dbReference>
<dbReference type="ChiTaRS" id="Sbf2">
    <property type="organism name" value="mouse"/>
</dbReference>
<dbReference type="PRO" id="PR:E9PXF8"/>
<dbReference type="Proteomes" id="UP000000589">
    <property type="component" value="Chromosome 7"/>
</dbReference>
<dbReference type="RNAct" id="E9PXF8">
    <property type="molecule type" value="protein"/>
</dbReference>
<dbReference type="Bgee" id="ENSMUSG00000038371">
    <property type="expression patterns" value="Expressed in paneth cell and 267 other cell types or tissues"/>
</dbReference>
<dbReference type="ExpressionAtlas" id="E9PXF8">
    <property type="expression patterns" value="baseline and differential"/>
</dbReference>
<dbReference type="GO" id="GO:0030424">
    <property type="term" value="C:axon"/>
    <property type="evidence" value="ECO:0007669"/>
    <property type="project" value="UniProtKB-SubCell"/>
</dbReference>
<dbReference type="GO" id="GO:0005829">
    <property type="term" value="C:cytosol"/>
    <property type="evidence" value="ECO:0000304"/>
    <property type="project" value="Reactome"/>
</dbReference>
<dbReference type="GO" id="GO:0010008">
    <property type="term" value="C:endosome membrane"/>
    <property type="evidence" value="ECO:0007669"/>
    <property type="project" value="UniProtKB-SubCell"/>
</dbReference>
<dbReference type="GO" id="GO:0048471">
    <property type="term" value="C:perinuclear region of cytoplasm"/>
    <property type="evidence" value="ECO:0007669"/>
    <property type="project" value="UniProtKB-SubCell"/>
</dbReference>
<dbReference type="GO" id="GO:0005774">
    <property type="term" value="C:vacuolar membrane"/>
    <property type="evidence" value="ECO:0000314"/>
    <property type="project" value="MGI"/>
</dbReference>
<dbReference type="GO" id="GO:0005085">
    <property type="term" value="F:guanyl-nucleotide exchange factor activity"/>
    <property type="evidence" value="ECO:0007669"/>
    <property type="project" value="UniProtKB-KW"/>
</dbReference>
<dbReference type="GO" id="GO:0042802">
    <property type="term" value="F:identical protein binding"/>
    <property type="evidence" value="ECO:0000353"/>
    <property type="project" value="MGI"/>
</dbReference>
<dbReference type="GO" id="GO:0019902">
    <property type="term" value="F:phosphatase binding"/>
    <property type="evidence" value="ECO:0000353"/>
    <property type="project" value="MGI"/>
</dbReference>
<dbReference type="GO" id="GO:0019208">
    <property type="term" value="F:phosphatase regulator activity"/>
    <property type="evidence" value="ECO:0000314"/>
    <property type="project" value="MGI"/>
</dbReference>
<dbReference type="GO" id="GO:0035091">
    <property type="term" value="F:phosphatidylinositol binding"/>
    <property type="evidence" value="ECO:0000314"/>
    <property type="project" value="MGI"/>
</dbReference>
<dbReference type="GO" id="GO:0006914">
    <property type="term" value="P:autophagy"/>
    <property type="evidence" value="ECO:0007669"/>
    <property type="project" value="UniProtKB-KW"/>
</dbReference>
<dbReference type="CDD" id="cd13339">
    <property type="entry name" value="PH-GRAM_MTMR13"/>
    <property type="match status" value="1"/>
</dbReference>
<dbReference type="CDD" id="cd01235">
    <property type="entry name" value="PH_Sbf1_hMTMR5"/>
    <property type="match status" value="1"/>
</dbReference>
<dbReference type="FunFam" id="2.30.29.30:FF:000093">
    <property type="entry name" value="SET binding factor 2"/>
    <property type="match status" value="1"/>
</dbReference>
<dbReference type="FunFam" id="3.30.450.200:FF:000004">
    <property type="entry name" value="SET binding factor 2"/>
    <property type="match status" value="1"/>
</dbReference>
<dbReference type="FunFam" id="3.40.50.11500:FF:000006">
    <property type="entry name" value="SET binding factor 2"/>
    <property type="match status" value="1"/>
</dbReference>
<dbReference type="Gene3D" id="3.30.450.200">
    <property type="match status" value="1"/>
</dbReference>
<dbReference type="Gene3D" id="3.40.50.11500">
    <property type="match status" value="1"/>
</dbReference>
<dbReference type="Gene3D" id="2.30.29.30">
    <property type="entry name" value="Pleckstrin-homology domain (PH domain)/Phosphotyrosine-binding domain (PTB)"/>
    <property type="match status" value="2"/>
</dbReference>
<dbReference type="InterPro" id="IPR001194">
    <property type="entry name" value="cDENN_dom"/>
</dbReference>
<dbReference type="InterPro" id="IPR005112">
    <property type="entry name" value="dDENN_dom"/>
</dbReference>
<dbReference type="InterPro" id="IPR043153">
    <property type="entry name" value="DENN_C"/>
</dbReference>
<dbReference type="InterPro" id="IPR004182">
    <property type="entry name" value="GRAM"/>
</dbReference>
<dbReference type="InterPro" id="IPR037823">
    <property type="entry name" value="MTMR13_PH-GRAM"/>
</dbReference>
<dbReference type="InterPro" id="IPR030564">
    <property type="entry name" value="Myotubularin"/>
</dbReference>
<dbReference type="InterPro" id="IPR010569">
    <property type="entry name" value="Myotubularin-like_Pase_dom"/>
</dbReference>
<dbReference type="InterPro" id="IPR011993">
    <property type="entry name" value="PH-like_dom_sf"/>
</dbReference>
<dbReference type="InterPro" id="IPR001849">
    <property type="entry name" value="PH_domain"/>
</dbReference>
<dbReference type="InterPro" id="IPR029021">
    <property type="entry name" value="Prot-tyrosine_phosphatase-like"/>
</dbReference>
<dbReference type="InterPro" id="IPR022096">
    <property type="entry name" value="SBF1/SBF2"/>
</dbReference>
<dbReference type="InterPro" id="IPR037516">
    <property type="entry name" value="Tripartite_DENN"/>
</dbReference>
<dbReference type="InterPro" id="IPR005113">
    <property type="entry name" value="uDENN_dom"/>
</dbReference>
<dbReference type="PANTHER" id="PTHR10807">
    <property type="entry name" value="MYOTUBULARIN-RELATED"/>
    <property type="match status" value="1"/>
</dbReference>
<dbReference type="PANTHER" id="PTHR10807:SF4">
    <property type="entry name" value="MYOTUBULARIN-RELATED PROTEIN 13"/>
    <property type="match status" value="1"/>
</dbReference>
<dbReference type="Pfam" id="PF02141">
    <property type="entry name" value="DENN"/>
    <property type="match status" value="1"/>
</dbReference>
<dbReference type="Pfam" id="PF02893">
    <property type="entry name" value="GRAM"/>
    <property type="match status" value="1"/>
</dbReference>
<dbReference type="Pfam" id="PF06602">
    <property type="entry name" value="Myotub-related"/>
    <property type="match status" value="1"/>
</dbReference>
<dbReference type="Pfam" id="PF00169">
    <property type="entry name" value="PH"/>
    <property type="match status" value="1"/>
</dbReference>
<dbReference type="Pfam" id="PF12335">
    <property type="entry name" value="SBF2"/>
    <property type="match status" value="1"/>
</dbReference>
<dbReference type="Pfam" id="PF03456">
    <property type="entry name" value="uDENN"/>
    <property type="match status" value="1"/>
</dbReference>
<dbReference type="SMART" id="SM00801">
    <property type="entry name" value="dDENN"/>
    <property type="match status" value="1"/>
</dbReference>
<dbReference type="SMART" id="SM00799">
    <property type="entry name" value="DENN"/>
    <property type="match status" value="1"/>
</dbReference>
<dbReference type="SMART" id="SM00568">
    <property type="entry name" value="GRAM"/>
    <property type="match status" value="1"/>
</dbReference>
<dbReference type="SMART" id="SM00233">
    <property type="entry name" value="PH"/>
    <property type="match status" value="1"/>
</dbReference>
<dbReference type="SMART" id="SM00800">
    <property type="entry name" value="uDENN"/>
    <property type="match status" value="1"/>
</dbReference>
<dbReference type="SUPFAM" id="SSF52799">
    <property type="entry name" value="(Phosphotyrosine protein) phosphatases II"/>
    <property type="match status" value="1"/>
</dbReference>
<dbReference type="SUPFAM" id="SSF50729">
    <property type="entry name" value="PH domain-like"/>
    <property type="match status" value="2"/>
</dbReference>
<dbReference type="PROSITE" id="PS50211">
    <property type="entry name" value="DENN"/>
    <property type="match status" value="1"/>
</dbReference>
<dbReference type="PROSITE" id="PS50003">
    <property type="entry name" value="PH_DOMAIN"/>
    <property type="match status" value="1"/>
</dbReference>
<dbReference type="PROSITE" id="PS51339">
    <property type="entry name" value="PPASE_MYOTUBULARIN"/>
    <property type="match status" value="1"/>
</dbReference>
<comment type="function">
    <text evidence="1 7">Guanine nucleotide exchange factor (GEF) which activates RAB21 and possibly RAB28 (By similarity). Promotes the exchange of GDP to GTP, converting inactive GDP-bound Rab proteins into their active GTP-bound form (By similarity). In response to starvation-induced autophagy, activates RAB21 which in turn binds to and regulates SNARE protein VAMP8 endolysosomal transport required for SNARE-mediated autophagosome-lysosome fusion (By similarity). Acts as an adapter for the phosphatase MTMR2 (PubMed:16399794). Increases MTMR2 catalytic activity towards phosphatidylinositol 3,5-bisphosphate and to a lesser extent towards phosphatidylinositol 3-phosphate (PubMed:16399794).</text>
</comment>
<comment type="subunit">
    <text evidence="1 7 11">Homodimer (PubMed:16399794). Heterotetramer consisting of one MTMR2 dimer and one SBF2/MTMR13 dimer; stabilizes SBF2/MTMR13 at the membranes and increases MTMR2 catalytic activity towards phosphatidylinositol 3,5-bisphosphate and to a lesser extent towards phosphatidylinositol 3-phosphate (PubMed:16399794). Interacts with SBF1/MTMR5; the interaction seems to be independent of the coiled-coil and PH domain of SBF2/MTMR13 and independent of MTMR2 (By similarity). Interacts with class II PI3-kinase PIK3C2A (PubMed:22648168). Interacts (via DENN domain) with RAB21 (in GDP-bound form) in response to starvation; the interaction activates RAB21 (By similarity). Interacts with VAMP8 in response to starvation (By similarity).</text>
</comment>
<comment type="subcellular location">
    <subcellularLocation>
        <location evidence="7 8 12">Cytoplasm</location>
    </subcellularLocation>
    <subcellularLocation>
        <location evidence="8">Cytoplasm</location>
        <location evidence="8">Perinuclear region</location>
    </subcellularLocation>
    <subcellularLocation>
        <location evidence="1">Membrane</location>
        <topology evidence="1">Peripheral membrane protein</topology>
    </subcellularLocation>
    <subcellularLocation>
        <location evidence="12">Endosome membrane</location>
        <topology evidence="14">Peripheral membrane protein</topology>
    </subcellularLocation>
    <subcellularLocation>
        <location evidence="12">Cell projection</location>
        <location evidence="12">Axon</location>
    </subcellularLocation>
    <text evidence="1 7 12">Associated with membranes (By similarity). Localizes to vacuoles in hypo-osmotic conditions (PubMed:16399794). Membrane localization is likely to be mediated via its interaction with MTMR2 (PubMed:23297362).</text>
</comment>
<comment type="alternative products">
    <event type="alternative splicing"/>
    <isoform>
        <id>E9PXF8-1</id>
        <name evidence="14">1</name>
        <sequence type="displayed"/>
    </isoform>
    <isoform>
        <id>E9PXF8-2</id>
        <name evidence="14">2</name>
        <sequence type="described" ref="VSP_060070"/>
    </isoform>
</comment>
<comment type="tissue specificity">
    <text evidence="7 8 9 10 11 12 13">Expressed in sciatic nerve and in Schwann cells (at protein level) (PubMed:16399794, PubMed:16750429, PubMed:17855448, PubMed:18349142, PubMed:23297362, PubMed:34718573). Expressed in brain (at protein level) (PubMed:18349142, PubMed:22648168). Highly expressed in brain, heart, kidney and testis, and to a lesser extent in lung, stomach, small intestine, skeletal muscle, liver and placenta (PubMed:16750429). Expressed in spinal cord and eye (PubMed:16750429). Not expressed in thymus and spleen (PubMed:16750429).</text>
</comment>
<comment type="developmental stage">
    <text evidence="8 13">In 9 dpc embryos, strongly expressed in the craniofacial region, the branchial arches and in limb buds. Also expressed in brain and along the neural tube. At 9 dpc and 10 dpc, no expression is detected in the heart but at later stages expressed weakly in the ventricle. At 11 dpc and 12 dpc, highly expressed in the neural tube, limb bud, dorsal trunk and tail mesenchyme. In the brain of 13 dpc embryos, highly expressed in the cortex and the dorsal spinal cord and weakly in midbrain. Highest expression in sciatic nerves at P7 (PubMed:34718573).</text>
</comment>
<comment type="domain">
    <text evidence="7">The C-terminal domain mediates homodimerization (PubMed:16399794). By mediating SBF2/MTMR13 homodimerization, indirectly involved in SBF2/MTMR13 and MTMR2 homotetramerization (PubMed:16399794).</text>
</comment>
<comment type="domain">
    <text evidence="7">The GRAM domain mediates binding to phosphatidylinositol 4-phosphate, phosphatidylinositol 5-phosphate, phosphatidylinositol 3,5-biphosphate and phosphatidylinositol 3,4,5-trisphosphate.</text>
</comment>
<comment type="domain">
    <text evidence="7 12">The PH domain binds preferentially phosphatidylinositol 3,4,5-trisphosphate (PubMed:16399794). Appears to be dispensable for localization to membranes (PubMed:23297362).</text>
</comment>
<comment type="disruption phenotype">
    <text evidence="9 10 12 13">Mice are born at the expected Mendelian rate (PubMed:18349142). Display demyelinating peripheral neuropathy characterized by slowed nerve conduction velocity, axon degeneration, and myelin outfolding and infolding in motor and sensory peripheral nerves (PubMed:17855448, PubMed:18349142, PubMed:23297362). Defects in myelination start to appear at postnatal day 3 (P3) (PubMed:23297362). The neuropathy severity increases with age (PubMed:17855448, PubMed:23297362). No impact on Mtmr5 protein levels in mouse brain or sciatic nerves (PubMed:34718573). Double knockout animals with Mtmr5 are non-viable, dying during late gestation or within a few hours of birth (PubMed:34718573).</text>
</comment>
<comment type="similarity">
    <text evidence="2">Belongs to the protein-tyrosine phosphatase family. Non-receptor class myotubularin subfamily.</text>
</comment>
<comment type="caution">
    <text evidence="14">Although it belongs to the non-receptor class myotubularin subfamily, lacks the conserved active site cysteine residue at position 1433 in the dsPTPase catalytic loop, suggesting that it has no phosphatase activity.</text>
</comment>
<comment type="caution">
    <text evidence="9 10 12">MTMR2 protein levels are decreased in sciatic nerves but not in the brain (PubMed:18349142, PubMed:23297362). However, MTMR2 protein levels have also been shown not to be affected in sciatic nerves (PubMed:17855448).</text>
</comment>
<keyword id="KW-0025">Alternative splicing</keyword>
<keyword id="KW-0072">Autophagy</keyword>
<keyword id="KW-0966">Cell projection</keyword>
<keyword id="KW-0963">Cytoplasm</keyword>
<keyword id="KW-0967">Endosome</keyword>
<keyword id="KW-0344">Guanine-nucleotide releasing factor</keyword>
<keyword id="KW-0472">Membrane</keyword>
<keyword id="KW-0597">Phosphoprotein</keyword>
<keyword id="KW-1185">Reference proteome</keyword>
<accession>E9PXF8</accession>
<accession>E9Q305</accession>
<accession>Q8BJ67</accession>
<accession>Q8BJD2</accession>
<accession>Q8BJP4</accession>
<accession>Q91VH0</accession>
<evidence type="ECO:0000250" key="1">
    <source>
        <dbReference type="UniProtKB" id="Q86WG5"/>
    </source>
</evidence>
<evidence type="ECO:0000255" key="2"/>
<evidence type="ECO:0000255" key="3">
    <source>
        <dbReference type="PROSITE-ProRule" id="PRU00145"/>
    </source>
</evidence>
<evidence type="ECO:0000255" key="4">
    <source>
        <dbReference type="PROSITE-ProRule" id="PRU00304"/>
    </source>
</evidence>
<evidence type="ECO:0000255" key="5">
    <source>
        <dbReference type="PROSITE-ProRule" id="PRU00669"/>
    </source>
</evidence>
<evidence type="ECO:0000256" key="6">
    <source>
        <dbReference type="SAM" id="MobiDB-lite"/>
    </source>
</evidence>
<evidence type="ECO:0000269" key="7">
    <source>
    </source>
</evidence>
<evidence type="ECO:0000269" key="8">
    <source>
    </source>
</evidence>
<evidence type="ECO:0000269" key="9">
    <source>
    </source>
</evidence>
<evidence type="ECO:0000269" key="10">
    <source>
    </source>
</evidence>
<evidence type="ECO:0000269" key="11">
    <source>
    </source>
</evidence>
<evidence type="ECO:0000269" key="12">
    <source>
    </source>
</evidence>
<evidence type="ECO:0000269" key="13">
    <source>
    </source>
</evidence>
<evidence type="ECO:0000305" key="14"/>
<evidence type="ECO:0000312" key="15">
    <source>
        <dbReference type="EMBL" id="AAH15069.1"/>
    </source>
</evidence>
<evidence type="ECO:0000312" key="16">
    <source>
        <dbReference type="EMBL" id="BAC39860.1"/>
    </source>
</evidence>
<evidence type="ECO:0000312" key="17">
    <source>
        <dbReference type="MGI" id="MGI:1921831"/>
    </source>
</evidence>
<evidence type="ECO:0000312" key="18">
    <source>
        <dbReference type="Proteomes" id="UP000000589"/>
    </source>
</evidence>
<evidence type="ECO:0007744" key="19">
    <source>
    </source>
</evidence>
<feature type="chain" id="PRO_0000446366" description="Myotubularin-related protein 13">
    <location>
        <begin position="1"/>
        <end position="1872"/>
    </location>
</feature>
<feature type="domain" description="uDENN" evidence="4">
    <location>
        <begin position="7"/>
        <end position="172"/>
    </location>
</feature>
<feature type="domain" description="cDENN" evidence="4">
    <location>
        <begin position="191"/>
        <end position="324"/>
    </location>
</feature>
<feature type="domain" description="dDENN" evidence="4">
    <location>
        <begin position="326"/>
        <end position="427"/>
    </location>
</feature>
<feature type="domain" description="GRAM" evidence="2">
    <location>
        <begin position="869"/>
        <end position="1004"/>
    </location>
</feature>
<feature type="domain" description="Myotubularin phosphatase" evidence="5">
    <location>
        <begin position="1106"/>
        <end position="1607"/>
    </location>
</feature>
<feature type="domain" description="PH" evidence="3">
    <location>
        <begin position="1766"/>
        <end position="1870"/>
    </location>
</feature>
<feature type="region of interest" description="Required for homodimerization and interaction with MTMR2" evidence="1 7">
    <location>
        <begin position="1652"/>
        <end position="1705"/>
    </location>
</feature>
<feature type="region of interest" description="Disordered" evidence="6">
    <location>
        <begin position="1697"/>
        <end position="1720"/>
    </location>
</feature>
<feature type="modified residue" description="Phosphoserine" evidence="1">
    <location>
        <position position="1125"/>
    </location>
</feature>
<feature type="modified residue" description="Phosphoserine" evidence="1">
    <location>
        <position position="1302"/>
    </location>
</feature>
<feature type="splice variant" id="VSP_060070" description="In isoform 2." evidence="14">
    <location>
        <begin position="1263"/>
        <end position="1287"/>
    </location>
</feature>
<feature type="sequence conflict" description="In Ref. 2; BAC39860." evidence="14" ref="2">
    <original>I</original>
    <variation>F</variation>
    <location>
        <position position="300"/>
    </location>
</feature>
<feature type="sequence conflict" description="In Ref. 3; AAH15069." evidence="14" ref="3">
    <original>L</original>
    <variation>F</variation>
    <location>
        <position position="1496"/>
    </location>
</feature>
<proteinExistence type="evidence at protein level"/>
<sequence>MARLADYFIVVGYDHEKPAGPGEGLGKIIQRFPQQDWDDTPFPQGIELFCQPGGWHLSRERKQPTFFVVVLTDIDSDRHYCSCLTFYEAEINLQGTKKEEIEGEEVSGLIQPAEVFAPKSLVLVSRLDYPEIFRACLGLIYTVYVDSMSVSLESLIANLCACLVPAAGGSQKLFSLGAGDRQLIQTPLHDSLPVTGTSVALLFQQLGIQNVLNLFCAVLTENKVLFHSASFQRLSDACRALESLMFPLKYSYPYIPILPAQLLEVLSSPTPFIIGVHSIFKTDVHELLDVIIADLDGGTIKIPECIHLSSLPEPLLHQTQSALSLILHPDLEVADHAFPPPRTALSHSKMLDKEVRAVFLRLFAQLFQGYRSCLQLIRIHAEPVIHFHKTAFLGQRGLVENDFLTKVLNGMAFAGFVSERGPPYRACDLFDELVAFEVERIKVEEKNPLKMIKHIRELAEQLFKNENPNPHMAFQKVPRPTEGSHLRVHILPFPKINEARVQELIQENLAKNQNAPPATRIEKKCVVPAGPPVVSIMEKVITVFNSAQRLEVVRNCISFIFENKTLETEKTLPAALRALKGKAARQCLTDELGLHVQQNRAILDHQQFDYIIRMMNCTLQDCSSLEEYNIAAALLPLTSAFYRKLAPGVSQFAYTCVQDHPIWTNQQFWETTFYNAVQEQVRSLYLSAKDDNHIPHLKQKLPDGQHQEKTAMDLAAEQLRLWPTLSKSTQQELVQHEESTVFSQAIHFANLMVNLLVPLDTSKNKLLRASAPGDWESGSNSIVTNSIAGSVAESYDTESGFEDSENSDVANSVVRFIARFIDKVCTESGVTQDHIRSLHCMIPGIVAMHIETLEAVHRESRRLPPIQKPKILRPALLPGEEIVCEGLRVLLDPDGREEATGGLLGGPQLLPAEGALFLTTYRILFRGTPHDQLVGEQTVVRSFPIASITKEKKITMQNQLQQSVQEGLQITSASFQLIKVAFDEEVSPEVVDIFKKQLMKFRYPQSIFSTFAFAAGQTTPQIILPKQKEKNTSFRTFSKTIVKGAKKAGKMTIGRQYLLKKRTGTIVEERVNRPGWNEEDDISVSDDSELPTSTTLKASEKSTMEQLVEKACFRDYQRLGLGTISGNSSRSKPEYFRVTASNRLYSLCRSYPGLLVIPQAVQDSSLPRVARCYRHNRLPVVCWKNSRSGTLLLRSGGFHGKGVVGLFKSQNSPQAVSTSSLESSSSIEQEKYLQALLTAVIVHQKLRGSSTLTVRPALALSPVHGYRDKSFTQSNPKSSAKEPVHNQGVWASLRSSTRLISSPTSFIDVGARLAGKDHSASFSNSTYLQNQLLKRQAALYIFGEKSQLRSSKVEFAFNCEFVPVEFHEIRQVKASFKKLMRACIPSTIPTDSEVTFLKALGDSEWFPQLHRIMQLAVVVSEVLENGSSVWVCLEEGWDITTQVTSLAQLLSDPFYRTIAGFRTLVEKEWLSFGHKFSQRSSLALNSQGGGFAPIFLQFLDCVHQVHNQYPTEFEFNLYYLKFLAFHYVSNRFKTFLLDSDYERLEHGTLFDDKGDKHAKKGVCIWECIDKMHTRSPIFFNYLYSPVEVEALKPNVNVSSLKKWDYYTEETLSAGPSYDWMMLTPKHFPYEESDVAGGAGPQSQRKTVWPCYDDVTCSQPDALTRLFSEIEKLEHKLNQTPERWHQLWEKVTTDLKEEPRTAHSLRHSAGSPGIASTNVPSYQKRPALHPLHRGLGEDQSTTTAPSNGVEHRAATLYSQYTSKNDENRSFEGTLYKRGALLKGWKPRWFVLDVTKHQLRYYDSGEDTSCKGHIDLAEVEMVIPAGPSMGAPKYTSDKAFFDLKTSKRVYNFCAQDGQSAQQWMDRIQSCISDA</sequence>
<name>MTMRD_MOUSE</name>